<sequence>MELKNCPLINEIKRQIGSHTHILVGFSGGVDSTVLLHGLVCLRDKYQLPLELTAIYVHHGLNSKADDWLTHCEHFCHNWQVSFISERVQVNGKEGGIEQGAREARYQAYRQYLQPNQVLVTAQHQDDQAETFLLALKRGSGPAGLSSMPAKMPFEQGYLLRPLLNITREQIEAYAHEHGLLWIEDDSNQDDRYDRNFLRLHVMPLLTQRWPHFSQAVTRSAALCGEQEALLDELLDVELQQLIDEHQSLDINLLSRCSEIKRNALLRRWFAKCNKSMPSRSQLSRLWQEVALAKADAEPRLRFFQDEVRRYQQRLYLVPVMEELTDRVIEWSLSQPLILPNQLGILAVSRDSGKTICRAPLADEKVTVRFGLTASSLRIVGRDLARSSKKIWQELNIAPWQRTRIPLIYYNDTLIAAVNTFVTLEGNATTEQSITIEWQAS</sequence>
<dbReference type="EC" id="6.3.4.19" evidence="1"/>
<dbReference type="EMBL" id="AM942759">
    <property type="protein sequence ID" value="CAR44491.1"/>
    <property type="molecule type" value="Genomic_DNA"/>
</dbReference>
<dbReference type="RefSeq" id="WP_004248710.1">
    <property type="nucleotide sequence ID" value="NC_010554.1"/>
</dbReference>
<dbReference type="SMR" id="B4F252"/>
<dbReference type="EnsemblBacteria" id="CAR44491">
    <property type="protein sequence ID" value="CAR44491"/>
    <property type="gene ID" value="PMI2267"/>
</dbReference>
<dbReference type="GeneID" id="6801003"/>
<dbReference type="KEGG" id="pmr:PMI2267"/>
<dbReference type="PATRIC" id="fig|529507.6.peg.2214"/>
<dbReference type="eggNOG" id="COG0037">
    <property type="taxonomic scope" value="Bacteria"/>
</dbReference>
<dbReference type="HOGENOM" id="CLU_018869_2_0_6"/>
<dbReference type="Proteomes" id="UP000008319">
    <property type="component" value="Chromosome"/>
</dbReference>
<dbReference type="GO" id="GO:0005737">
    <property type="term" value="C:cytoplasm"/>
    <property type="evidence" value="ECO:0007669"/>
    <property type="project" value="UniProtKB-SubCell"/>
</dbReference>
<dbReference type="GO" id="GO:0005524">
    <property type="term" value="F:ATP binding"/>
    <property type="evidence" value="ECO:0007669"/>
    <property type="project" value="UniProtKB-UniRule"/>
</dbReference>
<dbReference type="GO" id="GO:0032267">
    <property type="term" value="F:tRNA(Ile)-lysidine synthase activity"/>
    <property type="evidence" value="ECO:0007669"/>
    <property type="project" value="UniProtKB-EC"/>
</dbReference>
<dbReference type="GO" id="GO:0006400">
    <property type="term" value="P:tRNA modification"/>
    <property type="evidence" value="ECO:0007669"/>
    <property type="project" value="UniProtKB-UniRule"/>
</dbReference>
<dbReference type="CDD" id="cd01992">
    <property type="entry name" value="TilS_N"/>
    <property type="match status" value="1"/>
</dbReference>
<dbReference type="Gene3D" id="1.20.59.20">
    <property type="match status" value="1"/>
</dbReference>
<dbReference type="Gene3D" id="3.40.50.620">
    <property type="entry name" value="HUPs"/>
    <property type="match status" value="1"/>
</dbReference>
<dbReference type="HAMAP" id="MF_01161">
    <property type="entry name" value="tRNA_Ile_lys_synt"/>
    <property type="match status" value="1"/>
</dbReference>
<dbReference type="InterPro" id="IPR012796">
    <property type="entry name" value="Lysidine-tRNA-synth_C"/>
</dbReference>
<dbReference type="InterPro" id="IPR014729">
    <property type="entry name" value="Rossmann-like_a/b/a_fold"/>
</dbReference>
<dbReference type="InterPro" id="IPR011063">
    <property type="entry name" value="TilS/TtcA_N"/>
</dbReference>
<dbReference type="InterPro" id="IPR012094">
    <property type="entry name" value="tRNA_Ile_lys_synt"/>
</dbReference>
<dbReference type="InterPro" id="IPR012795">
    <property type="entry name" value="tRNA_Ile_lys_synt_N"/>
</dbReference>
<dbReference type="InterPro" id="IPR015262">
    <property type="entry name" value="tRNA_Ile_lys_synt_subst-bd"/>
</dbReference>
<dbReference type="NCBIfam" id="TIGR02433">
    <property type="entry name" value="lysidine_TilS_C"/>
    <property type="match status" value="1"/>
</dbReference>
<dbReference type="NCBIfam" id="TIGR02432">
    <property type="entry name" value="lysidine_TilS_N"/>
    <property type="match status" value="1"/>
</dbReference>
<dbReference type="NCBIfam" id="NF007942">
    <property type="entry name" value="PRK10660.1"/>
    <property type="match status" value="1"/>
</dbReference>
<dbReference type="PANTHER" id="PTHR43033">
    <property type="entry name" value="TRNA(ILE)-LYSIDINE SYNTHASE-RELATED"/>
    <property type="match status" value="1"/>
</dbReference>
<dbReference type="PANTHER" id="PTHR43033:SF1">
    <property type="entry name" value="TRNA(ILE)-LYSIDINE SYNTHASE-RELATED"/>
    <property type="match status" value="1"/>
</dbReference>
<dbReference type="Pfam" id="PF01171">
    <property type="entry name" value="ATP_bind_3"/>
    <property type="match status" value="1"/>
</dbReference>
<dbReference type="Pfam" id="PF09179">
    <property type="entry name" value="TilS"/>
    <property type="match status" value="1"/>
</dbReference>
<dbReference type="Pfam" id="PF11734">
    <property type="entry name" value="TilS_C"/>
    <property type="match status" value="1"/>
</dbReference>
<dbReference type="SMART" id="SM00977">
    <property type="entry name" value="TilS_C"/>
    <property type="match status" value="1"/>
</dbReference>
<dbReference type="SUPFAM" id="SSF52402">
    <property type="entry name" value="Adenine nucleotide alpha hydrolases-like"/>
    <property type="match status" value="1"/>
</dbReference>
<dbReference type="SUPFAM" id="SSF82829">
    <property type="entry name" value="MesJ substrate recognition domain-like"/>
    <property type="match status" value="1"/>
</dbReference>
<dbReference type="SUPFAM" id="SSF56037">
    <property type="entry name" value="PheT/TilS domain"/>
    <property type="match status" value="1"/>
</dbReference>
<proteinExistence type="inferred from homology"/>
<keyword id="KW-0067">ATP-binding</keyword>
<keyword id="KW-0963">Cytoplasm</keyword>
<keyword id="KW-0436">Ligase</keyword>
<keyword id="KW-0547">Nucleotide-binding</keyword>
<keyword id="KW-1185">Reference proteome</keyword>
<keyword id="KW-0819">tRNA processing</keyword>
<name>TILS_PROMH</name>
<feature type="chain" id="PRO_1000213715" description="tRNA(Ile)-lysidine synthase">
    <location>
        <begin position="1"/>
        <end position="441"/>
    </location>
</feature>
<feature type="binding site" evidence="1">
    <location>
        <begin position="27"/>
        <end position="32"/>
    </location>
    <ligand>
        <name>ATP</name>
        <dbReference type="ChEBI" id="CHEBI:30616"/>
    </ligand>
</feature>
<evidence type="ECO:0000255" key="1">
    <source>
        <dbReference type="HAMAP-Rule" id="MF_01161"/>
    </source>
</evidence>
<accession>B4F252</accession>
<protein>
    <recommendedName>
        <fullName evidence="1">tRNA(Ile)-lysidine synthase</fullName>
        <ecNumber evidence="1">6.3.4.19</ecNumber>
    </recommendedName>
    <alternativeName>
        <fullName evidence="1">tRNA(Ile)-2-lysyl-cytidine synthase</fullName>
    </alternativeName>
    <alternativeName>
        <fullName evidence="1">tRNA(Ile)-lysidine synthetase</fullName>
    </alternativeName>
</protein>
<reference key="1">
    <citation type="journal article" date="2008" name="J. Bacteriol.">
        <title>Complete genome sequence of uropathogenic Proteus mirabilis, a master of both adherence and motility.</title>
        <authorList>
            <person name="Pearson M.M."/>
            <person name="Sebaihia M."/>
            <person name="Churcher C."/>
            <person name="Quail M.A."/>
            <person name="Seshasayee A.S."/>
            <person name="Luscombe N.M."/>
            <person name="Abdellah Z."/>
            <person name="Arrosmith C."/>
            <person name="Atkin B."/>
            <person name="Chillingworth T."/>
            <person name="Hauser H."/>
            <person name="Jagels K."/>
            <person name="Moule S."/>
            <person name="Mungall K."/>
            <person name="Norbertczak H."/>
            <person name="Rabbinowitsch E."/>
            <person name="Walker D."/>
            <person name="Whithead S."/>
            <person name="Thomson N.R."/>
            <person name="Rather P.N."/>
            <person name="Parkhill J."/>
            <person name="Mobley H.L.T."/>
        </authorList>
    </citation>
    <scope>NUCLEOTIDE SEQUENCE [LARGE SCALE GENOMIC DNA]</scope>
    <source>
        <strain>HI4320</strain>
    </source>
</reference>
<gene>
    <name evidence="1" type="primary">tilS</name>
    <name type="ordered locus">PMI2267</name>
</gene>
<comment type="function">
    <text evidence="1">Ligates lysine onto the cytidine present at position 34 of the AUA codon-specific tRNA(Ile) that contains the anticodon CAU, in an ATP-dependent manner. Cytidine is converted to lysidine, thus changing the amino acid specificity of the tRNA from methionine to isoleucine.</text>
</comment>
<comment type="catalytic activity">
    <reaction evidence="1">
        <text>cytidine(34) in tRNA(Ile2) + L-lysine + ATP = lysidine(34) in tRNA(Ile2) + AMP + diphosphate + H(+)</text>
        <dbReference type="Rhea" id="RHEA:43744"/>
        <dbReference type="Rhea" id="RHEA-COMP:10625"/>
        <dbReference type="Rhea" id="RHEA-COMP:10670"/>
        <dbReference type="ChEBI" id="CHEBI:15378"/>
        <dbReference type="ChEBI" id="CHEBI:30616"/>
        <dbReference type="ChEBI" id="CHEBI:32551"/>
        <dbReference type="ChEBI" id="CHEBI:33019"/>
        <dbReference type="ChEBI" id="CHEBI:82748"/>
        <dbReference type="ChEBI" id="CHEBI:83665"/>
        <dbReference type="ChEBI" id="CHEBI:456215"/>
        <dbReference type="EC" id="6.3.4.19"/>
    </reaction>
</comment>
<comment type="subcellular location">
    <subcellularLocation>
        <location evidence="1">Cytoplasm</location>
    </subcellularLocation>
</comment>
<comment type="domain">
    <text>The N-terminal region contains the highly conserved SGGXDS motif, predicted to be a P-loop motif involved in ATP binding.</text>
</comment>
<comment type="similarity">
    <text evidence="1">Belongs to the tRNA(Ile)-lysidine synthase family.</text>
</comment>
<organism>
    <name type="scientific">Proteus mirabilis (strain HI4320)</name>
    <dbReference type="NCBI Taxonomy" id="529507"/>
    <lineage>
        <taxon>Bacteria</taxon>
        <taxon>Pseudomonadati</taxon>
        <taxon>Pseudomonadota</taxon>
        <taxon>Gammaproteobacteria</taxon>
        <taxon>Enterobacterales</taxon>
        <taxon>Morganellaceae</taxon>
        <taxon>Proteus</taxon>
    </lineage>
</organism>